<accession>B5XY80</accession>
<name>Y3615_KLEP3</name>
<organism>
    <name type="scientific">Klebsiella pneumoniae (strain 342)</name>
    <dbReference type="NCBI Taxonomy" id="507522"/>
    <lineage>
        <taxon>Bacteria</taxon>
        <taxon>Pseudomonadati</taxon>
        <taxon>Pseudomonadota</taxon>
        <taxon>Gammaproteobacteria</taxon>
        <taxon>Enterobacterales</taxon>
        <taxon>Enterobacteriaceae</taxon>
        <taxon>Klebsiella/Raoultella group</taxon>
        <taxon>Klebsiella</taxon>
        <taxon>Klebsiella pneumoniae complex</taxon>
    </lineage>
</organism>
<dbReference type="EMBL" id="CP000964">
    <property type="protein sequence ID" value="ACI07371.1"/>
    <property type="molecule type" value="Genomic_DNA"/>
</dbReference>
<dbReference type="SMR" id="B5XY80"/>
<dbReference type="KEGG" id="kpe:KPK_3615"/>
<dbReference type="HOGENOM" id="CLU_155659_3_1_6"/>
<dbReference type="BioCyc" id="KPNE507522:GI0B-3598-MONOMER"/>
<dbReference type="Proteomes" id="UP000001734">
    <property type="component" value="Chromosome"/>
</dbReference>
<dbReference type="GO" id="GO:0005829">
    <property type="term" value="C:cytosol"/>
    <property type="evidence" value="ECO:0007669"/>
    <property type="project" value="TreeGrafter"/>
</dbReference>
<dbReference type="FunFam" id="2.20.25.10:FF:000002">
    <property type="entry name" value="UPF0434 protein YcaR"/>
    <property type="match status" value="1"/>
</dbReference>
<dbReference type="Gene3D" id="2.20.25.10">
    <property type="match status" value="1"/>
</dbReference>
<dbReference type="HAMAP" id="MF_01187">
    <property type="entry name" value="UPF0434"/>
    <property type="match status" value="1"/>
</dbReference>
<dbReference type="InterPro" id="IPR005651">
    <property type="entry name" value="Trm112-like"/>
</dbReference>
<dbReference type="NCBIfam" id="NF008806">
    <property type="entry name" value="PRK11827.1"/>
    <property type="match status" value="1"/>
</dbReference>
<dbReference type="PANTHER" id="PTHR33505:SF4">
    <property type="entry name" value="PROTEIN PREY, MITOCHONDRIAL"/>
    <property type="match status" value="1"/>
</dbReference>
<dbReference type="PANTHER" id="PTHR33505">
    <property type="entry name" value="ZGC:162634"/>
    <property type="match status" value="1"/>
</dbReference>
<dbReference type="Pfam" id="PF03966">
    <property type="entry name" value="Trm112p"/>
    <property type="match status" value="1"/>
</dbReference>
<dbReference type="SUPFAM" id="SSF158997">
    <property type="entry name" value="Trm112p-like"/>
    <property type="match status" value="1"/>
</dbReference>
<comment type="similarity">
    <text evidence="1">Belongs to the UPF0434 family.</text>
</comment>
<gene>
    <name type="ordered locus">KPK_3615</name>
</gene>
<proteinExistence type="inferred from homology"/>
<reference key="1">
    <citation type="journal article" date="2008" name="PLoS Genet.">
        <title>Complete genome sequence of the N2-fixing broad host range endophyte Klebsiella pneumoniae 342 and virulence predictions verified in mice.</title>
        <authorList>
            <person name="Fouts D.E."/>
            <person name="Tyler H.L."/>
            <person name="DeBoy R.T."/>
            <person name="Daugherty S."/>
            <person name="Ren Q."/>
            <person name="Badger J.H."/>
            <person name="Durkin A.S."/>
            <person name="Huot H."/>
            <person name="Shrivastava S."/>
            <person name="Kothari S."/>
            <person name="Dodson R.J."/>
            <person name="Mohamoud Y."/>
            <person name="Khouri H."/>
            <person name="Roesch L.F.W."/>
            <person name="Krogfelt K.A."/>
            <person name="Struve C."/>
            <person name="Triplett E.W."/>
            <person name="Methe B.A."/>
        </authorList>
    </citation>
    <scope>NUCLEOTIDE SEQUENCE [LARGE SCALE GENOMIC DNA]</scope>
    <source>
        <strain>342</strain>
    </source>
</reference>
<evidence type="ECO:0000255" key="1">
    <source>
        <dbReference type="HAMAP-Rule" id="MF_01187"/>
    </source>
</evidence>
<sequence length="60" mass="6787">MDHRLLEIIACPVCNGKLYYSQDKQELICKLDSLAFPLRDGIPVLLETEARALTVEESHS</sequence>
<feature type="chain" id="PRO_1000138315" description="UPF0434 protein KPK_3615">
    <location>
        <begin position="1"/>
        <end position="60"/>
    </location>
</feature>
<protein>
    <recommendedName>
        <fullName evidence="1">UPF0434 protein KPK_3615</fullName>
    </recommendedName>
</protein>